<reference key="1">
    <citation type="journal article" date="2005" name="Nature">
        <title>The genome sequence of the rice blast fungus Magnaporthe grisea.</title>
        <authorList>
            <person name="Dean R.A."/>
            <person name="Talbot N.J."/>
            <person name="Ebbole D.J."/>
            <person name="Farman M.L."/>
            <person name="Mitchell T.K."/>
            <person name="Orbach M.J."/>
            <person name="Thon M.R."/>
            <person name="Kulkarni R."/>
            <person name="Xu J.-R."/>
            <person name="Pan H."/>
            <person name="Read N.D."/>
            <person name="Lee Y.-H."/>
            <person name="Carbone I."/>
            <person name="Brown D."/>
            <person name="Oh Y.Y."/>
            <person name="Donofrio N."/>
            <person name="Jeong J.S."/>
            <person name="Soanes D.M."/>
            <person name="Djonovic S."/>
            <person name="Kolomiets E."/>
            <person name="Rehmeyer C."/>
            <person name="Li W."/>
            <person name="Harding M."/>
            <person name="Kim S."/>
            <person name="Lebrun M.-H."/>
            <person name="Bohnert H."/>
            <person name="Coughlan S."/>
            <person name="Butler J."/>
            <person name="Calvo S.E."/>
            <person name="Ma L.-J."/>
            <person name="Nicol R."/>
            <person name="Purcell S."/>
            <person name="Nusbaum C."/>
            <person name="Galagan J.E."/>
            <person name="Birren B.W."/>
        </authorList>
    </citation>
    <scope>NUCLEOTIDE SEQUENCE [LARGE SCALE GENOMIC DNA]</scope>
    <source>
        <strain>70-15 / ATCC MYA-4617 / FGSC 8958</strain>
    </source>
</reference>
<reference key="2">
    <citation type="journal article" date="2008" name="New Phytol.">
        <title>Magnaporthe grisea avirulence gene ACE1 belongs to an infection-specific gene cluster involved in secondary metabolism.</title>
        <authorList>
            <person name="Collemare J."/>
            <person name="Pianfetti M."/>
            <person name="Houlle A.E."/>
            <person name="Morin D."/>
            <person name="Camborde L."/>
            <person name="Gagey M.J."/>
            <person name="Barbisan C."/>
            <person name="Fudal I."/>
            <person name="Lebrun M.H."/>
            <person name="Boehnert H.U."/>
        </authorList>
    </citation>
    <scope>FUNCTION</scope>
    <scope>INDUCTION</scope>
    <scope>PATHWAY</scope>
</reference>
<reference key="3">
    <citation type="journal article" date="2015" name="Chem. Sci.">
        <title>Heterologous expression of the avirulence gene ACE1 from the fungal rice pathogen Magnaporthe oryzae.</title>
        <authorList>
            <person name="Song Z."/>
            <person name="Bakeer W."/>
            <person name="Marshall J.W."/>
            <person name="Yakasai A.A."/>
            <person name="Khalid R.M."/>
            <person name="Collemare J."/>
            <person name="Skellam E."/>
            <person name="Tharreau D."/>
            <person name="Lebrun M.H."/>
            <person name="Lazarus C.M."/>
            <person name="Bailey A.M."/>
            <person name="Simpson T.J."/>
            <person name="Cox R.J."/>
        </authorList>
    </citation>
    <scope>FUNCTION</scope>
</reference>
<reference key="4">
    <citation type="journal article" date="2019" name="Org. Lett.">
        <title>Investigating the function of cryptic cytochalasan cytochrome P450 monooxygenases using combinatorial biosynthesis.</title>
        <authorList>
            <person name="Wang C."/>
            <person name="Becker K."/>
            <person name="Pfuetze S."/>
            <person name="Kuhnert E."/>
            <person name="Stadler M."/>
            <person name="Cox R.J."/>
            <person name="Skellam E."/>
        </authorList>
    </citation>
    <scope>FUNCTION</scope>
</reference>
<gene>
    <name evidence="7" type="primary">OXR2</name>
    <name type="ORF">MGG_15927</name>
</gene>
<evidence type="ECO:0000255" key="1"/>
<evidence type="ECO:0000255" key="2">
    <source>
        <dbReference type="PROSITE-ProRule" id="PRU00498"/>
    </source>
</evidence>
<evidence type="ECO:0000255" key="3">
    <source>
        <dbReference type="PROSITE-ProRule" id="PRU00718"/>
    </source>
</evidence>
<evidence type="ECO:0000269" key="4">
    <source>
    </source>
</evidence>
<evidence type="ECO:0000269" key="5">
    <source>
    </source>
</evidence>
<evidence type="ECO:0000269" key="6">
    <source>
    </source>
</evidence>
<evidence type="ECO:0000303" key="7">
    <source>
    </source>
</evidence>
<evidence type="ECO:0000303" key="8">
    <source>
    </source>
</evidence>
<evidence type="ECO:0000305" key="9"/>
<evidence type="ECO:0000305" key="10">
    <source>
    </source>
</evidence>
<evidence type="ECO:0000305" key="11">
    <source>
    </source>
</evidence>
<organism>
    <name type="scientific">Pyricularia oryzae (strain 70-15 / ATCC MYA-4617 / FGSC 8958)</name>
    <name type="common">Rice blast fungus</name>
    <name type="synonym">Magnaporthe oryzae</name>
    <dbReference type="NCBI Taxonomy" id="242507"/>
    <lineage>
        <taxon>Eukaryota</taxon>
        <taxon>Fungi</taxon>
        <taxon>Dikarya</taxon>
        <taxon>Ascomycota</taxon>
        <taxon>Pezizomycotina</taxon>
        <taxon>Sordariomycetes</taxon>
        <taxon>Sordariomycetidae</taxon>
        <taxon>Magnaporthales</taxon>
        <taxon>Pyriculariaceae</taxon>
        <taxon>Pyricularia</taxon>
    </lineage>
</organism>
<sequence>MRSIISAFILSLNFCTQPLVRGAPSAADWQELQKAVEGRLFTAEPLARPCFSTFQGKSVEPNVEECSTTKQHYLNSTFKTAAYAGFVHSYNEACASNVTDQCLLSADTFSTNGKNTSGTAPLTGPCNLGMLSEKYIAVSRAEDVQAAFRFAHRTGMPLSVKATGHDYAARSSLKGSLALWTRQLNDIAFNPSFTPVGGSSSPIAAMTVGGGANLGEVYKFADRHNVTFIGGSSGTVAAAGGYSLLGGHGTLTPTYGMGADRMLEATIVTPDGELRIANAHMNSDLFWALRGAGSATFGVVLNATFKVEPVMPLTLALMSFNSTGANTGPFLSLLMKHTNIWAEEGWGGPMSMSTLALVNPAMSVDAAKQSMKEVADYVSAQGGTVVLESLPSFYAFYTKYVEAASSTGTGAATFATFRTLPKRLHQSEEGRAAMTKTFRDIKAAGHDTFIFQTTPNKFPYEPGSNAVHPSWRDSYWLVGTSISWSSNDAGLEERMRVAAAVQEVSKNLTDLAPEGSMYPNEADPWTRNWAKEFWGEENYARLVQVKRKYDPHGLIGCWKCVGFEDKLMETESAFRCLGAFQKKR</sequence>
<name>OXR2B_PYRO7</name>
<protein>
    <recommendedName>
        <fullName evidence="7">FAD-linked oxidoreductase OXR2</fullName>
        <ecNumber evidence="10">1.-.-.-</ecNumber>
    </recommendedName>
    <alternativeName>
        <fullName evidence="8">ACE1 cytochalasan biosynthesis cluster protein OXR2</fullName>
    </alternativeName>
</protein>
<feature type="signal peptide" evidence="1">
    <location>
        <begin position="1"/>
        <end position="22"/>
    </location>
</feature>
<feature type="chain" id="PRO_5003466222" description="FAD-linked oxidoreductase OXR2" evidence="1">
    <location>
        <begin position="23"/>
        <end position="584"/>
    </location>
</feature>
<feature type="domain" description="FAD-binding PCMH-type" evidence="3">
    <location>
        <begin position="128"/>
        <end position="310"/>
    </location>
</feature>
<feature type="glycosylation site" description="N-linked (GlcNAc...) asparagine" evidence="2">
    <location>
        <position position="75"/>
    </location>
</feature>
<feature type="glycosylation site" description="N-linked (GlcNAc...) asparagine" evidence="2">
    <location>
        <position position="97"/>
    </location>
</feature>
<feature type="glycosylation site" description="N-linked (GlcNAc...) asparagine" evidence="2">
    <location>
        <position position="115"/>
    </location>
</feature>
<feature type="glycosylation site" description="N-linked (GlcNAc...) asparagine" evidence="2">
    <location>
        <position position="225"/>
    </location>
</feature>
<feature type="glycosylation site" description="N-linked (GlcNAc...) asparagine" evidence="2">
    <location>
        <position position="302"/>
    </location>
</feature>
<feature type="glycosylation site" description="N-linked (GlcNAc...) asparagine" evidence="2">
    <location>
        <position position="321"/>
    </location>
</feature>
<feature type="glycosylation site" description="N-linked (GlcNAc...) asparagine" evidence="2">
    <location>
        <position position="507"/>
    </location>
</feature>
<accession>G4MWA7</accession>
<keyword id="KW-0274">FAD</keyword>
<keyword id="KW-0285">Flavoprotein</keyword>
<keyword id="KW-0325">Glycoprotein</keyword>
<keyword id="KW-0560">Oxidoreductase</keyword>
<keyword id="KW-1185">Reference proteome</keyword>
<keyword id="KW-0732">Signal</keyword>
<dbReference type="EC" id="1.-.-.-" evidence="10"/>
<dbReference type="EMBL" id="CM001232">
    <property type="protein sequence ID" value="EHA55867.1"/>
    <property type="molecule type" value="Genomic_DNA"/>
</dbReference>
<dbReference type="RefSeq" id="XP_003715674.1">
    <property type="nucleotide sequence ID" value="XM_003715626.1"/>
</dbReference>
<dbReference type="SMR" id="G4MWA7"/>
<dbReference type="STRING" id="242507.G4MWA7"/>
<dbReference type="GlyCosmos" id="G4MWA7">
    <property type="glycosylation" value="7 sites, No reported glycans"/>
</dbReference>
<dbReference type="EnsemblFungi" id="MGG_15927T0">
    <property type="protein sequence ID" value="MGG_15927T0"/>
    <property type="gene ID" value="MGG_15927"/>
</dbReference>
<dbReference type="GeneID" id="12986739"/>
<dbReference type="KEGG" id="mgr:MGG_15927"/>
<dbReference type="VEuPathDB" id="FungiDB:MGG_15927"/>
<dbReference type="eggNOG" id="ENOG502QQWK">
    <property type="taxonomic scope" value="Eukaryota"/>
</dbReference>
<dbReference type="HOGENOM" id="CLU_018354_4_4_1"/>
<dbReference type="InParanoid" id="G4MWA7"/>
<dbReference type="OMA" id="RTVNACQ"/>
<dbReference type="OrthoDB" id="9983560at2759"/>
<dbReference type="Proteomes" id="UP000009058">
    <property type="component" value="Chromosome 2"/>
</dbReference>
<dbReference type="GO" id="GO:0071949">
    <property type="term" value="F:FAD binding"/>
    <property type="evidence" value="ECO:0007669"/>
    <property type="project" value="InterPro"/>
</dbReference>
<dbReference type="GO" id="GO:0016491">
    <property type="term" value="F:oxidoreductase activity"/>
    <property type="evidence" value="ECO:0007669"/>
    <property type="project" value="UniProtKB-KW"/>
</dbReference>
<dbReference type="Gene3D" id="3.30.465.10">
    <property type="match status" value="2"/>
</dbReference>
<dbReference type="InterPro" id="IPR012951">
    <property type="entry name" value="BBE"/>
</dbReference>
<dbReference type="InterPro" id="IPR016166">
    <property type="entry name" value="FAD-bd_PCMH"/>
</dbReference>
<dbReference type="InterPro" id="IPR036318">
    <property type="entry name" value="FAD-bd_PCMH-like_sf"/>
</dbReference>
<dbReference type="InterPro" id="IPR016169">
    <property type="entry name" value="FAD-bd_PCMH_sub2"/>
</dbReference>
<dbReference type="InterPro" id="IPR050432">
    <property type="entry name" value="FAD-linked_Oxidoreductases_BP"/>
</dbReference>
<dbReference type="InterPro" id="IPR006094">
    <property type="entry name" value="Oxid_FAD_bind_N"/>
</dbReference>
<dbReference type="PANTHER" id="PTHR13878:SF91">
    <property type="entry name" value="FAD BINDING DOMAIN PROTEIN (AFU_ORTHOLOGUE AFUA_6G12070)-RELATED"/>
    <property type="match status" value="1"/>
</dbReference>
<dbReference type="PANTHER" id="PTHR13878">
    <property type="entry name" value="GULONOLACTONE OXIDASE"/>
    <property type="match status" value="1"/>
</dbReference>
<dbReference type="Pfam" id="PF08031">
    <property type="entry name" value="BBE"/>
    <property type="match status" value="1"/>
</dbReference>
<dbReference type="Pfam" id="PF01565">
    <property type="entry name" value="FAD_binding_4"/>
    <property type="match status" value="1"/>
</dbReference>
<dbReference type="SUPFAM" id="SSF56176">
    <property type="entry name" value="FAD-binding/transporter-associated domain-like"/>
    <property type="match status" value="1"/>
</dbReference>
<dbReference type="PROSITE" id="PS51387">
    <property type="entry name" value="FAD_PCMH"/>
    <property type="match status" value="1"/>
</dbReference>
<comment type="function">
    <text evidence="4 5 6 10 11">FAD-linked oxidoreductase; part of the gene cluster that mediates the biosynthesis of a tyrosine-derived cytochalasan acting as a fungal signal recognized by resistant rice plants and leads to avirulence in Pi33 resistant rice cultivars (PubMed:18433432). The first step in the pathway is catalyzed by the hybrid PKS-NRPS ACE1, assisted by the enoyl reductase RAP1, that are responsible for fusion of the tyrosine precursor and the polyketide backbone (PubMed:29142718). The polyketide synthase module (PKS) of ACE1 is responsible for the synthesis of the polyketide backbone and the downstream nonribosomal peptide synthetase (NRPS) amidates the carboxyl end of the polyketide with the tyrosine precursor (PubMed:29142718). Because ACE1 lacks a designated enoylreductase (ER) domain, the required activity is provided the enoyl reductase RAP1 (PubMed:29142718). Reduction by the hydrolyase ORFZ, followed by dehydration and intra-molecular Diels-Alder cyclization by the Diels-Alderase ORF3 then yield the required isoindolone-fused macrocycle (Probable). A number of oxidative steps catalyzed by the tailoring enzymes identified within the cluster, including cytochrome P450 monooxygenases CYP1 to CYP4, the FAD-linked oxidoreductase OXR2 and the short-chain dehydrogenase/reductase OXR1, are further required to afford the final cytochalasans that confer avirulence and which have still to be identified (Probable). The monooxygenase CYP1 has been shown to be a site-selective C-18 hydroxylase whereas the function of CYP3 is the site-selective epoxidation of the C-6/C-7 olefin that is present in some intermediate compounds (PubMed:31644300). Finally, SYN2 and RAP2 are not required for avirulence in Pi33 resistant rice cultivars (PubMed:18433432).</text>
</comment>
<comment type="cofactor">
    <cofactor evidence="9">
        <name>FAD</name>
        <dbReference type="ChEBI" id="CHEBI:57692"/>
    </cofactor>
</comment>
<comment type="pathway">
    <text evidence="10">Secondary metabolite biosynthesis.</text>
</comment>
<comment type="induction">
    <text evidence="4">Expressed exclusively during fungal penetration of host leaves, the time point at which plant defense reactions are triggered.</text>
</comment>
<comment type="similarity">
    <text evidence="9">Belongs to the oxygen-dependent FAD-linked oxidoreductase family.</text>
</comment>
<proteinExistence type="evidence at transcript level"/>